<organism>
    <name type="scientific">Listeria innocua serovar 6a (strain ATCC BAA-680 / CLIP 11262)</name>
    <dbReference type="NCBI Taxonomy" id="272626"/>
    <lineage>
        <taxon>Bacteria</taxon>
        <taxon>Bacillati</taxon>
        <taxon>Bacillota</taxon>
        <taxon>Bacilli</taxon>
        <taxon>Bacillales</taxon>
        <taxon>Listeriaceae</taxon>
        <taxon>Listeria</taxon>
    </lineage>
</organism>
<feature type="chain" id="PRO_0000160520" description="ATP-dependent protease ATPase subunit HslU">
    <location>
        <begin position="1"/>
        <end position="469"/>
    </location>
</feature>
<feature type="region of interest" description="Disordered" evidence="2">
    <location>
        <begin position="159"/>
        <end position="179"/>
    </location>
</feature>
<feature type="binding site" evidence="1">
    <location>
        <position position="24"/>
    </location>
    <ligand>
        <name>ATP</name>
        <dbReference type="ChEBI" id="CHEBI:30616"/>
    </ligand>
</feature>
<feature type="binding site" evidence="1">
    <location>
        <begin position="66"/>
        <end position="71"/>
    </location>
    <ligand>
        <name>ATP</name>
        <dbReference type="ChEBI" id="CHEBI:30616"/>
    </ligand>
</feature>
<feature type="binding site" evidence="1">
    <location>
        <position position="282"/>
    </location>
    <ligand>
        <name>ATP</name>
        <dbReference type="ChEBI" id="CHEBI:30616"/>
    </ligand>
</feature>
<feature type="binding site" evidence="1">
    <location>
        <position position="347"/>
    </location>
    <ligand>
        <name>ATP</name>
        <dbReference type="ChEBI" id="CHEBI:30616"/>
    </ligand>
</feature>
<feature type="binding site" evidence="1">
    <location>
        <position position="419"/>
    </location>
    <ligand>
        <name>ATP</name>
        <dbReference type="ChEBI" id="CHEBI:30616"/>
    </ligand>
</feature>
<comment type="function">
    <text evidence="1">ATPase subunit of a proteasome-like degradation complex; this subunit has chaperone activity. The binding of ATP and its subsequent hydrolysis by HslU are essential for unfolding of protein substrates subsequently hydrolyzed by HslV. HslU recognizes the N-terminal part of its protein substrates and unfolds these before they are guided to HslV for hydrolysis.</text>
</comment>
<comment type="subunit">
    <text evidence="1">A double ring-shaped homohexamer of HslV is capped on each side by a ring-shaped HslU homohexamer. The assembly of the HslU/HslV complex is dependent on binding of ATP.</text>
</comment>
<comment type="subcellular location">
    <subcellularLocation>
        <location evidence="1">Cytoplasm</location>
    </subcellularLocation>
</comment>
<comment type="similarity">
    <text evidence="1">Belongs to the ClpX chaperone family. HslU subfamily.</text>
</comment>
<sequence>MTNLTLMNQLTPKQIVEKLDQYIIGQTGAKKSVAVALRNRYRRQLMDESIRDEIIPKNILMIGPTGVGKTEIARRIAKIVRAPFSKVEATKFTEVGYVGRDVESMVRDLVEVSVRLVKEEKMQLVRVKAEKNAEKRLIKLLAPSQKKKQTTSQNPLEALFGSMNQPDEPAEEEVDQELKNKRSQIEWRLQNGELDDEIVTVEVKEQQNPMFDMMRGTGMDQMSGMQDALSGMFPAKKKKRKVTVREAKKILFEDEASKLIDSDELAAEGIHRAEQMGMIFIDEIDKIASKEGGGNAQVSREGVQRDILPIVEGSQISTKYGTVNTEYILFIAAGAFHMSKPSDLIPELQGRFPIRIELDKLTQEDFYKILTEPDNALIKQYKALLKTEGIDLIFTKEAVERIAEIAFQVNQDSDNIGARRLHTILEKLLEDLLFEAPEINMESIKVTENYVNEKLAPIMTNKDLTQFIL</sequence>
<gene>
    <name evidence="1" type="primary">hslU</name>
    <name type="synonym">clpY</name>
    <name type="ordered locus">lin1318</name>
</gene>
<keyword id="KW-0067">ATP-binding</keyword>
<keyword id="KW-0143">Chaperone</keyword>
<keyword id="KW-0963">Cytoplasm</keyword>
<keyword id="KW-0547">Nucleotide-binding</keyword>
<protein>
    <recommendedName>
        <fullName evidence="1">ATP-dependent protease ATPase subunit HslU</fullName>
    </recommendedName>
    <alternativeName>
        <fullName evidence="1">Unfoldase HslU</fullName>
    </alternativeName>
</protein>
<dbReference type="EMBL" id="AL596168">
    <property type="protein sequence ID" value="CAC96549.1"/>
    <property type="molecule type" value="Genomic_DNA"/>
</dbReference>
<dbReference type="PIR" id="AE1597">
    <property type="entry name" value="AE1597"/>
</dbReference>
<dbReference type="RefSeq" id="WP_010990922.1">
    <property type="nucleotide sequence ID" value="NC_003212.1"/>
</dbReference>
<dbReference type="SMR" id="Q92C73"/>
<dbReference type="STRING" id="272626.gene:17565649"/>
<dbReference type="GeneID" id="93234698"/>
<dbReference type="KEGG" id="lin:clpY"/>
<dbReference type="eggNOG" id="COG1220">
    <property type="taxonomic scope" value="Bacteria"/>
</dbReference>
<dbReference type="HOGENOM" id="CLU_033123_0_0_9"/>
<dbReference type="OrthoDB" id="9804062at2"/>
<dbReference type="Proteomes" id="UP000002513">
    <property type="component" value="Chromosome"/>
</dbReference>
<dbReference type="GO" id="GO:0009376">
    <property type="term" value="C:HslUV protease complex"/>
    <property type="evidence" value="ECO:0007669"/>
    <property type="project" value="UniProtKB-UniRule"/>
</dbReference>
<dbReference type="GO" id="GO:0005524">
    <property type="term" value="F:ATP binding"/>
    <property type="evidence" value="ECO:0007669"/>
    <property type="project" value="UniProtKB-UniRule"/>
</dbReference>
<dbReference type="GO" id="GO:0016887">
    <property type="term" value="F:ATP hydrolysis activity"/>
    <property type="evidence" value="ECO:0007669"/>
    <property type="project" value="InterPro"/>
</dbReference>
<dbReference type="GO" id="GO:0008233">
    <property type="term" value="F:peptidase activity"/>
    <property type="evidence" value="ECO:0007669"/>
    <property type="project" value="InterPro"/>
</dbReference>
<dbReference type="GO" id="GO:0036402">
    <property type="term" value="F:proteasome-activating activity"/>
    <property type="evidence" value="ECO:0007669"/>
    <property type="project" value="UniProtKB-UniRule"/>
</dbReference>
<dbReference type="GO" id="GO:0043335">
    <property type="term" value="P:protein unfolding"/>
    <property type="evidence" value="ECO:0007669"/>
    <property type="project" value="UniProtKB-UniRule"/>
</dbReference>
<dbReference type="GO" id="GO:0051603">
    <property type="term" value="P:proteolysis involved in protein catabolic process"/>
    <property type="evidence" value="ECO:0007669"/>
    <property type="project" value="TreeGrafter"/>
</dbReference>
<dbReference type="CDD" id="cd19498">
    <property type="entry name" value="RecA-like_HslU"/>
    <property type="match status" value="1"/>
</dbReference>
<dbReference type="Gene3D" id="1.10.8.60">
    <property type="match status" value="1"/>
</dbReference>
<dbReference type="Gene3D" id="1.10.8.10">
    <property type="entry name" value="DNA helicase RuvA subunit, C-terminal domain"/>
    <property type="match status" value="1"/>
</dbReference>
<dbReference type="Gene3D" id="3.40.50.300">
    <property type="entry name" value="P-loop containing nucleotide triphosphate hydrolases"/>
    <property type="match status" value="2"/>
</dbReference>
<dbReference type="HAMAP" id="MF_00249">
    <property type="entry name" value="HslU"/>
    <property type="match status" value="1"/>
</dbReference>
<dbReference type="InterPro" id="IPR003593">
    <property type="entry name" value="AAA+_ATPase"/>
</dbReference>
<dbReference type="InterPro" id="IPR050052">
    <property type="entry name" value="ATP-dep_Clp_protease_ClpX"/>
</dbReference>
<dbReference type="InterPro" id="IPR003959">
    <property type="entry name" value="ATPase_AAA_core"/>
</dbReference>
<dbReference type="InterPro" id="IPR019489">
    <property type="entry name" value="Clp_ATPase_C"/>
</dbReference>
<dbReference type="InterPro" id="IPR004491">
    <property type="entry name" value="HslU"/>
</dbReference>
<dbReference type="InterPro" id="IPR027417">
    <property type="entry name" value="P-loop_NTPase"/>
</dbReference>
<dbReference type="NCBIfam" id="TIGR00390">
    <property type="entry name" value="hslU"/>
    <property type="match status" value="1"/>
</dbReference>
<dbReference type="NCBIfam" id="NF003544">
    <property type="entry name" value="PRK05201.1"/>
    <property type="match status" value="1"/>
</dbReference>
<dbReference type="PANTHER" id="PTHR48102">
    <property type="entry name" value="ATP-DEPENDENT CLP PROTEASE ATP-BINDING SUBUNIT CLPX-LIKE, MITOCHONDRIAL-RELATED"/>
    <property type="match status" value="1"/>
</dbReference>
<dbReference type="PANTHER" id="PTHR48102:SF3">
    <property type="entry name" value="ATP-DEPENDENT PROTEASE ATPASE SUBUNIT HSLU"/>
    <property type="match status" value="1"/>
</dbReference>
<dbReference type="Pfam" id="PF00004">
    <property type="entry name" value="AAA"/>
    <property type="match status" value="1"/>
</dbReference>
<dbReference type="Pfam" id="PF07724">
    <property type="entry name" value="AAA_2"/>
    <property type="match status" value="1"/>
</dbReference>
<dbReference type="Pfam" id="PF10431">
    <property type="entry name" value="ClpB_D2-small"/>
    <property type="match status" value="1"/>
</dbReference>
<dbReference type="SMART" id="SM00382">
    <property type="entry name" value="AAA"/>
    <property type="match status" value="1"/>
</dbReference>
<dbReference type="SMART" id="SM01086">
    <property type="entry name" value="ClpB_D2-small"/>
    <property type="match status" value="1"/>
</dbReference>
<dbReference type="SUPFAM" id="SSF52540">
    <property type="entry name" value="P-loop containing nucleoside triphosphate hydrolases"/>
    <property type="match status" value="1"/>
</dbReference>
<proteinExistence type="inferred from homology"/>
<name>HSLU_LISIN</name>
<accession>Q92C73</accession>
<reference key="1">
    <citation type="journal article" date="2001" name="Science">
        <title>Comparative genomics of Listeria species.</title>
        <authorList>
            <person name="Glaser P."/>
            <person name="Frangeul L."/>
            <person name="Buchrieser C."/>
            <person name="Rusniok C."/>
            <person name="Amend A."/>
            <person name="Baquero F."/>
            <person name="Berche P."/>
            <person name="Bloecker H."/>
            <person name="Brandt P."/>
            <person name="Chakraborty T."/>
            <person name="Charbit A."/>
            <person name="Chetouani F."/>
            <person name="Couve E."/>
            <person name="de Daruvar A."/>
            <person name="Dehoux P."/>
            <person name="Domann E."/>
            <person name="Dominguez-Bernal G."/>
            <person name="Duchaud E."/>
            <person name="Durant L."/>
            <person name="Dussurget O."/>
            <person name="Entian K.-D."/>
            <person name="Fsihi H."/>
            <person name="Garcia-del Portillo F."/>
            <person name="Garrido P."/>
            <person name="Gautier L."/>
            <person name="Goebel W."/>
            <person name="Gomez-Lopez N."/>
            <person name="Hain T."/>
            <person name="Hauf J."/>
            <person name="Jackson D."/>
            <person name="Jones L.-M."/>
            <person name="Kaerst U."/>
            <person name="Kreft J."/>
            <person name="Kuhn M."/>
            <person name="Kunst F."/>
            <person name="Kurapkat G."/>
            <person name="Madueno E."/>
            <person name="Maitournam A."/>
            <person name="Mata Vicente J."/>
            <person name="Ng E."/>
            <person name="Nedjari H."/>
            <person name="Nordsiek G."/>
            <person name="Novella S."/>
            <person name="de Pablos B."/>
            <person name="Perez-Diaz J.-C."/>
            <person name="Purcell R."/>
            <person name="Remmel B."/>
            <person name="Rose M."/>
            <person name="Schlueter T."/>
            <person name="Simoes N."/>
            <person name="Tierrez A."/>
            <person name="Vazquez-Boland J.-A."/>
            <person name="Voss H."/>
            <person name="Wehland J."/>
            <person name="Cossart P."/>
        </authorList>
    </citation>
    <scope>NUCLEOTIDE SEQUENCE [LARGE SCALE GENOMIC DNA]</scope>
    <source>
        <strain>ATCC BAA-680 / CLIP 11262</strain>
    </source>
</reference>
<evidence type="ECO:0000255" key="1">
    <source>
        <dbReference type="HAMAP-Rule" id="MF_00249"/>
    </source>
</evidence>
<evidence type="ECO:0000256" key="2">
    <source>
        <dbReference type="SAM" id="MobiDB-lite"/>
    </source>
</evidence>